<sequence>MDKISIIPIVGVALSLAIILQLGRTYWRLRHIPGPFPACITNFQRVGWVKTKRAHLILQDMHKKYGEVVRIGPNMVSFSNPEVIPTVYPARSGFPKGDFYVTLRPYTRGGGALHAVFNTTEEDLHKQIKSPIAPMFTPANTPSFEGLVDEVLTCIHEKLDENFIANSEIFNLGQWLQYFAFDVMGTMTFSKRYGFLDTGKDVGRMLGTIVDFMRDAAPMTQIPWLDWALRKNRIGDSIQRLFGKTASLGILGFVGKAIKERQELLSKGDFKVSDEKSGRKDFLTRFIELQQNDPKIPPWAPTAWTFSNVIAGSDSVGSLMRTTMFNLLVYPHTLEKLHDELRSAGVSRPYPKWSEIRNLLYLDACVQEGARMHPPFALPFERVVPAGGITILGYYLPGGTVVGGSPYVVNRHRETFGRDAEFWRPERWLESDEGHKRKLEQGVLTFGAGRRVCLGKHVGILEIKKLISFLVLNYDIRVVNPEKFELENSWFFFQRGLYATIRKRPDAVAVKNQQV</sequence>
<name>MFMA_ANNMO</name>
<dbReference type="EC" id="1.-.-.-" evidence="3"/>
<dbReference type="EMBL" id="MU403194">
    <property type="protein sequence ID" value="KAI1452412.1"/>
    <property type="molecule type" value="Genomic_DNA"/>
</dbReference>
<dbReference type="UniPathway" id="UPA00213"/>
<dbReference type="CDD" id="cd11060">
    <property type="entry name" value="CYP57A1-like"/>
    <property type="match status" value="1"/>
</dbReference>
<dbReference type="Gene3D" id="1.10.630.10">
    <property type="entry name" value="Cytochrome P450"/>
    <property type="match status" value="1"/>
</dbReference>
<dbReference type="InterPro" id="IPR001128">
    <property type="entry name" value="Cyt_P450"/>
</dbReference>
<dbReference type="InterPro" id="IPR017972">
    <property type="entry name" value="Cyt_P450_CS"/>
</dbReference>
<dbReference type="InterPro" id="IPR002403">
    <property type="entry name" value="Cyt_P450_E_grp-IV"/>
</dbReference>
<dbReference type="InterPro" id="IPR036396">
    <property type="entry name" value="Cyt_P450_sf"/>
</dbReference>
<dbReference type="InterPro" id="IPR050121">
    <property type="entry name" value="Cytochrome_P450_monoxygenase"/>
</dbReference>
<dbReference type="PANTHER" id="PTHR24305">
    <property type="entry name" value="CYTOCHROME P450"/>
    <property type="match status" value="1"/>
</dbReference>
<dbReference type="PANTHER" id="PTHR24305:SF175">
    <property type="entry name" value="CYTOCHROME P450 MONOOXYGENASE PKFB"/>
    <property type="match status" value="1"/>
</dbReference>
<dbReference type="Pfam" id="PF00067">
    <property type="entry name" value="p450"/>
    <property type="match status" value="1"/>
</dbReference>
<dbReference type="PRINTS" id="PR00465">
    <property type="entry name" value="EP450IV"/>
</dbReference>
<dbReference type="PRINTS" id="PR00385">
    <property type="entry name" value="P450"/>
</dbReference>
<dbReference type="SUPFAM" id="SSF48264">
    <property type="entry name" value="Cytochrome P450"/>
    <property type="match status" value="1"/>
</dbReference>
<dbReference type="PROSITE" id="PS00086">
    <property type="entry name" value="CYTOCHROME_P450"/>
    <property type="match status" value="1"/>
</dbReference>
<feature type="chain" id="PRO_0000461994" description="Cytochrome P450 monooxygenase mfmA">
    <location>
        <begin position="1"/>
        <end position="515"/>
    </location>
</feature>
<feature type="transmembrane region" description="Helical" evidence="2">
    <location>
        <begin position="3"/>
        <end position="23"/>
    </location>
</feature>
<feature type="binding site" description="axial binding residue" evidence="1">
    <location>
        <position position="453"/>
    </location>
    <ligand>
        <name>heme</name>
        <dbReference type="ChEBI" id="CHEBI:30413"/>
    </ligand>
    <ligandPart>
        <name>Fe</name>
        <dbReference type="ChEBI" id="CHEBI:18248"/>
    </ligandPart>
</feature>
<evidence type="ECO:0000250" key="1">
    <source>
        <dbReference type="UniProtKB" id="P04798"/>
    </source>
</evidence>
<evidence type="ECO:0000255" key="2"/>
<evidence type="ECO:0000269" key="3">
    <source>
    </source>
</evidence>
<evidence type="ECO:0000303" key="4">
    <source>
    </source>
</evidence>
<evidence type="ECO:0000305" key="5"/>
<keyword id="KW-0349">Heme</keyword>
<keyword id="KW-0408">Iron</keyword>
<keyword id="KW-0472">Membrane</keyword>
<keyword id="KW-0479">Metal-binding</keyword>
<keyword id="KW-0503">Monooxygenase</keyword>
<keyword id="KW-0560">Oxidoreductase</keyword>
<keyword id="KW-0812">Transmembrane</keyword>
<keyword id="KW-1133">Transmembrane helix</keyword>
<proteinExistence type="evidence at protein level"/>
<gene>
    <name evidence="4" type="primary">mfmA</name>
    <name type="ORF">F4805DRAFT_29954</name>
</gene>
<reference key="1">
    <citation type="journal article" date="2022" name="New Phytol.">
        <title>Ecological generalism drives hyperdiversity of secondary metabolite gene clusters in xylarialean endophytes.</title>
        <authorList>
            <person name="Franco M.E.E."/>
            <person name="Wisecaver J.H."/>
            <person name="Arnold A.E."/>
            <person name="Ju Y.M."/>
            <person name="Slot J.C."/>
            <person name="Ahrendt S."/>
            <person name="Moore L.P."/>
            <person name="Eastman K.E."/>
            <person name="Scott K."/>
            <person name="Konkel Z."/>
            <person name="Mondo S.J."/>
            <person name="Kuo A."/>
            <person name="Hayes R.D."/>
            <person name="Haridas S."/>
            <person name="Andreopoulos B."/>
            <person name="Riley R."/>
            <person name="LaButti K."/>
            <person name="Pangilinan J."/>
            <person name="Lipzen A."/>
            <person name="Amirebrahimi M."/>
            <person name="Yan J."/>
            <person name="Adam C."/>
            <person name="Keymanesh K."/>
            <person name="Ng V."/>
            <person name="Louie K."/>
            <person name="Northen T."/>
            <person name="Drula E."/>
            <person name="Henrissat B."/>
            <person name="Hsieh H.M."/>
            <person name="Youens-Clark K."/>
            <person name="Lutzoni F."/>
            <person name="Miadlikowska J."/>
            <person name="Eastwood D.C."/>
            <person name="Hamelin R.C."/>
            <person name="Grigoriev I.V."/>
            <person name="U'Ren J.M."/>
        </authorList>
    </citation>
    <scope>NUCLEOTIDE SEQUENCE [GENOMIC DNA]</scope>
    <source>
        <strain>CBS 123579</strain>
    </source>
</reference>
<reference key="2">
    <citation type="journal article" date="2024" name="Chem. Sci.">
        <title>Global genome mining-driven discovery of an unusual biosynthetic logic for fungal polyketide-terpenoid hybrids.</title>
        <authorList>
            <person name="Yan D."/>
            <person name="Matsuda Y."/>
        </authorList>
    </citation>
    <scope>FUNCTION</scope>
    <scope>CATALYTIC ACTIVITY</scope>
    <scope>PATHWAY</scope>
    <source>
        <strain>CBS 123579</strain>
    </source>
</reference>
<organism>
    <name type="scientific">Annulohypoxylon moriforme</name>
    <name type="common">Filamentous fungus</name>
    <name type="synonym">Hypoxylon moriforme</name>
    <dbReference type="NCBI Taxonomy" id="326622"/>
    <lineage>
        <taxon>Eukaryota</taxon>
        <taxon>Fungi</taxon>
        <taxon>Dikarya</taxon>
        <taxon>Ascomycota</taxon>
        <taxon>Pezizomycotina</taxon>
        <taxon>Sordariomycetes</taxon>
        <taxon>Xylariomycetidae</taxon>
        <taxon>Xylariales</taxon>
        <taxon>Hypoxylaceae</taxon>
        <taxon>Annulohypoxylon</taxon>
    </lineage>
</organism>
<accession>P9WEG0</accession>
<protein>
    <recommendedName>
        <fullName evidence="4">Cytochrome P450 monooxygenase mfmA</fullName>
        <ecNumber evidence="3">1.-.-.-</ecNumber>
    </recommendedName>
    <alternativeName>
        <fullName evidence="4">11'-O-desmethylfendlerol biosynthesis cluster protein A</fullName>
    </alternativeName>
</protein>
<comment type="function">
    <text evidence="3">Cytochrome P450 monooxygenase; part of the gene cluster that mediates the biosynthesis of the phthalide-terpenoid hybrid 11'-O-desmethylfendlerol (PubMed:38404388). Within the pathway, mfma and mfmC act together to convert 3,5-dimethylorsellinic acid (DMOA) into the phthalide 5,7-dihydroxy-4-(hydroxymethyl)-6-methylphthalide (PubMed:38404388). MfmA performs especially an hydroxylation at C-9 (PubMed:38404388). The biosynthesis of 11'-O-desmethylfendlerol begins with the NR-PKS mfmB that forms 3,5-dimethylorsellinic acid (DMOA), which is then transformed into the phthalide 5,7-dihydroxy-4-(hydroxymethyl)-6-methylphthalide by the cytochrome P450 monooxygenase mfmA and the hydrolase mfmC. Subsequently, the methyltransferase mfmE catalyzes 7-O-methylation to yield 5-hydroxy-4-(hydroxymethyl)-7-methoxy-6-methylphthalide, which undergoes C-3 hydroxylation by the cytochrome P450 monooxygenase mfmF. The resultant cyclopolic acid (2,5-dihydroxy-4-(hydroxymethyl)-7-methoxy-6-methylphthalide) is then farnesylated by the DMATS-type prenyltransferase mfmD to afford 5-O-farnesylcyclopolic acid. Finally, the Pyr4-family terpene cyclase mfmH cyclizes the farnesyl moiety of 5-O-farnesylcyclopolic acid into a drimane-like structure, thus completing the biosynthesis of 11'-O-desmethylfendlerol (PubMed:38404388).</text>
</comment>
<comment type="cofactor">
    <cofactor evidence="1">
        <name>heme</name>
        <dbReference type="ChEBI" id="CHEBI:30413"/>
    </cofactor>
</comment>
<comment type="pathway">
    <text evidence="3">Secondary metabolite biosynthesis; terpenoid biosynthesis.</text>
</comment>
<comment type="subcellular location">
    <subcellularLocation>
        <location evidence="2">Membrane</location>
        <topology evidence="2">Single-pass membrane protein</topology>
    </subcellularLocation>
</comment>
<comment type="similarity">
    <text evidence="5">Belongs to the cytochrome P450 family.</text>
</comment>